<organism>
    <name type="scientific">Thiobacillus thioparus</name>
    <dbReference type="NCBI Taxonomy" id="931"/>
    <lineage>
        <taxon>Bacteria</taxon>
        <taxon>Pseudomonadati</taxon>
        <taxon>Pseudomonadota</taxon>
        <taxon>Betaproteobacteria</taxon>
        <taxon>Nitrosomonadales</taxon>
        <taxon>Thiobacillaceae</taxon>
        <taxon>Thiobacillus</taxon>
    </lineage>
</organism>
<keyword id="KW-0002">3D-structure</keyword>
<keyword id="KW-0903">Direct protein sequencing</keyword>
<keyword id="KW-0378">Hydrolase</keyword>
<accession>O66187</accession>
<name>SCNA_THITI</name>
<reference key="1">
    <citation type="journal article" date="1998" name="J. Bacteriol.">
        <title>Cloning of genes coding for the three subunits of thiocyanate hydrolase of Thiobacillus thioparus THI 115 and their evolutionary relationships to nitrile hydratase.</title>
        <authorList>
            <person name="Katayama Y."/>
            <person name="Matsushita Y."/>
            <person name="Kaneko M."/>
            <person name="Kondo M."/>
            <person name="Mizuno T."/>
            <person name="Nyunoya H."/>
        </authorList>
    </citation>
    <scope>NUCLEOTIDE SEQUENCE [GENOMIC DNA]</scope>
    <scope>PROTEIN SEQUENCE OF 2-13</scope>
    <source>
        <strain>THI 115</strain>
    </source>
</reference>
<reference key="2">
    <citation type="journal article" date="1992" name="J. Biol. Chem.">
        <title>A thiocyanate hydrolase of Thiobacillus thioparus. A novel enzyme catalyzing the formation of carbonyl sulfide from thiocyanate.</title>
        <authorList>
            <person name="Katayama Y."/>
            <person name="Narahara Y."/>
            <person name="Inoue Y."/>
            <person name="Amano F."/>
            <person name="Kanagawa T."/>
            <person name="Kuraishi H."/>
        </authorList>
    </citation>
    <scope>CHARACTERIZATION</scope>
    <source>
        <strain>THI 115</strain>
    </source>
</reference>
<reference key="3">
    <citation type="journal article" date="2007" name="J. Mol. Biol.">
        <title>Structure of thiocyanate hydrolase: a new nitrile hydratase family protein with a novel five-coordinate cobalt(III) center.</title>
        <authorList>
            <person name="Arakawa T."/>
            <person name="Kawano Y."/>
            <person name="Kataoka S."/>
            <person name="Katayama Y."/>
            <person name="Kamiya N."/>
            <person name="Yohda M."/>
            <person name="Odaka M."/>
        </authorList>
    </citation>
    <scope>X-RAY CRYSTALLOGRAPHY (1.9 ANGSTROMS) IN COMPLEX WITH SCNB AND SCNC</scope>
    <scope>SUBUNIT</scope>
</reference>
<protein>
    <recommendedName>
        <fullName>Thiocyanate hydrolase subunit alpha</fullName>
        <ecNumber>3.5.5.8</ecNumber>
    </recommendedName>
</protein>
<evidence type="ECO:0000269" key="1">
    <source>
    </source>
</evidence>
<evidence type="ECO:0000269" key="2">
    <source>
    </source>
</evidence>
<evidence type="ECO:0007829" key="3">
    <source>
        <dbReference type="PDB" id="3VYG"/>
    </source>
</evidence>
<proteinExistence type="evidence at protein level"/>
<gene>
    <name type="primary">scnA</name>
</gene>
<feature type="initiator methionine" description="Removed" evidence="2">
    <location>
        <position position="1"/>
    </location>
</feature>
<feature type="chain" id="PRO_0000097630" description="Thiocyanate hydrolase subunit alpha">
    <location>
        <begin position="2"/>
        <end position="126"/>
    </location>
</feature>
<feature type="helix" evidence="3">
    <location>
        <begin position="14"/>
        <end position="19"/>
    </location>
</feature>
<feature type="turn" evidence="3">
    <location>
        <begin position="20"/>
        <end position="22"/>
    </location>
</feature>
<feature type="helix" evidence="3">
    <location>
        <begin position="26"/>
        <end position="28"/>
    </location>
</feature>
<feature type="turn" evidence="3">
    <location>
        <begin position="29"/>
        <end position="32"/>
    </location>
</feature>
<feature type="strand" evidence="3">
    <location>
        <begin position="42"/>
        <end position="45"/>
    </location>
</feature>
<feature type="helix" evidence="3">
    <location>
        <begin position="58"/>
        <end position="60"/>
    </location>
</feature>
<feature type="strand" evidence="3">
    <location>
        <begin position="64"/>
        <end position="74"/>
    </location>
</feature>
<feature type="helix" evidence="3">
    <location>
        <begin position="77"/>
        <end position="80"/>
    </location>
</feature>
<feature type="turn" evidence="3">
    <location>
        <begin position="81"/>
        <end position="83"/>
    </location>
</feature>
<feature type="strand" evidence="3">
    <location>
        <begin position="89"/>
        <end position="97"/>
    </location>
</feature>
<feature type="helix" evidence="3">
    <location>
        <begin position="98"/>
        <end position="101"/>
    </location>
</feature>
<feature type="helix" evidence="3">
    <location>
        <begin position="107"/>
        <end position="109"/>
    </location>
</feature>
<feature type="strand" evidence="3">
    <location>
        <begin position="113"/>
        <end position="119"/>
    </location>
</feature>
<feature type="helix" evidence="3">
    <location>
        <begin position="120"/>
        <end position="122"/>
    </location>
</feature>
<feature type="strand" evidence="3">
    <location>
        <begin position="123"/>
        <end position="125"/>
    </location>
</feature>
<dbReference type="EC" id="3.5.5.8"/>
<dbReference type="EMBL" id="AB007989">
    <property type="protein sequence ID" value="BAA28287.1"/>
    <property type="molecule type" value="Genomic_DNA"/>
</dbReference>
<dbReference type="PDB" id="2DD4">
    <property type="method" value="X-ray"/>
    <property type="resolution" value="2.06 A"/>
    <property type="chains" value="A/D/G/J=1-126"/>
</dbReference>
<dbReference type="PDB" id="2DD5">
    <property type="method" value="X-ray"/>
    <property type="resolution" value="2.00 A"/>
    <property type="chains" value="A/D/G/J=1-126"/>
</dbReference>
<dbReference type="PDB" id="2DXB">
    <property type="method" value="X-ray"/>
    <property type="resolution" value="2.25 A"/>
    <property type="chains" value="A/D/G/J/M/P/S/V=1-126"/>
</dbReference>
<dbReference type="PDB" id="2DXC">
    <property type="method" value="X-ray"/>
    <property type="resolution" value="1.90 A"/>
    <property type="chains" value="A/D/G/J=1-126"/>
</dbReference>
<dbReference type="PDB" id="2ZZD">
    <property type="method" value="X-ray"/>
    <property type="resolution" value="1.78 A"/>
    <property type="chains" value="A/D/G/J=1-126"/>
</dbReference>
<dbReference type="PDB" id="3VYG">
    <property type="method" value="X-ray"/>
    <property type="resolution" value="1.72 A"/>
    <property type="chains" value="A/D/G/J=1-126"/>
</dbReference>
<dbReference type="PDBsum" id="2DD4"/>
<dbReference type="PDBsum" id="2DD5"/>
<dbReference type="PDBsum" id="2DXB"/>
<dbReference type="PDBsum" id="2DXC"/>
<dbReference type="PDBsum" id="2ZZD"/>
<dbReference type="PDBsum" id="3VYG"/>
<dbReference type="SMR" id="O66187"/>
<dbReference type="KEGG" id="ag:BAA28287"/>
<dbReference type="BioCyc" id="MetaCyc:MONOMER-2145"/>
<dbReference type="BRENDA" id="3.5.5.8">
    <property type="organism ID" value="6354"/>
</dbReference>
<dbReference type="UniPathway" id="UPA00366"/>
<dbReference type="EvolutionaryTrace" id="O66187"/>
<dbReference type="GO" id="GO:0018760">
    <property type="term" value="F:thiocyanate hydrolase activity"/>
    <property type="evidence" value="ECO:0007669"/>
    <property type="project" value="UniProtKB-EC"/>
</dbReference>
<dbReference type="GO" id="GO:0046265">
    <property type="term" value="P:thiocyanate catabolic process"/>
    <property type="evidence" value="ECO:0007669"/>
    <property type="project" value="UniProtKB-UniPathway"/>
</dbReference>
<dbReference type="Gene3D" id="2.30.30.50">
    <property type="match status" value="1"/>
</dbReference>
<dbReference type="InterPro" id="IPR024690">
    <property type="entry name" value="CN_hydtase_beta_dom_C"/>
</dbReference>
<dbReference type="InterPro" id="IPR008990">
    <property type="entry name" value="Elect_transpt_acc-like_dom_sf"/>
</dbReference>
<dbReference type="Pfam" id="PF02211">
    <property type="entry name" value="NHase_beta_C"/>
    <property type="match status" value="1"/>
</dbReference>
<dbReference type="SUPFAM" id="SSF50090">
    <property type="entry name" value="Electron transport accessory proteins"/>
    <property type="match status" value="1"/>
</dbReference>
<sequence>MSDSHHKPVWDRTHHAKMATGIGDPQCFKGMAGKSKFNVGDRVRIKDLPDLFYTRTMTYTRGATGTIVRLVYESPAAEDEAFGNEENVEWFYSIVFAQKDLWPEYSDTFANDTLETEIPERYLEKA</sequence>
<comment type="function">
    <text>Involved in the degradation of thiocyanate.</text>
</comment>
<comment type="catalytic activity">
    <reaction>
        <text>thiocyanate + H2O + 2 H(+) = carbonyl sulfide + NH4(+)</text>
        <dbReference type="Rhea" id="RHEA:21464"/>
        <dbReference type="ChEBI" id="CHEBI:15377"/>
        <dbReference type="ChEBI" id="CHEBI:15378"/>
        <dbReference type="ChEBI" id="CHEBI:16573"/>
        <dbReference type="ChEBI" id="CHEBI:18022"/>
        <dbReference type="ChEBI" id="CHEBI:28938"/>
        <dbReference type="EC" id="3.5.5.8"/>
    </reaction>
</comment>
<comment type="pathway">
    <text>Organosulfur degradation; thiocyanate degradation.</text>
</comment>
<comment type="subunit">
    <text evidence="1">Heterododecamer consisting of 4 alpha, 4 beta, and 4 gamma subunits.</text>
</comment>